<name>LCN6_HUMAN</name>
<organism>
    <name type="scientific">Homo sapiens</name>
    <name type="common">Human</name>
    <dbReference type="NCBI Taxonomy" id="9606"/>
    <lineage>
        <taxon>Eukaryota</taxon>
        <taxon>Metazoa</taxon>
        <taxon>Chordata</taxon>
        <taxon>Craniata</taxon>
        <taxon>Vertebrata</taxon>
        <taxon>Euteleostomi</taxon>
        <taxon>Mammalia</taxon>
        <taxon>Eutheria</taxon>
        <taxon>Euarchontoglires</taxon>
        <taxon>Primates</taxon>
        <taxon>Haplorrhini</taxon>
        <taxon>Catarrhini</taxon>
        <taxon>Hominidae</taxon>
        <taxon>Homo</taxon>
    </lineage>
</organism>
<gene>
    <name type="primary">LCN6</name>
    <name type="synonym">LCN5</name>
    <name type="ORF">UNQ643/PRO1273</name>
</gene>
<protein>
    <recommendedName>
        <fullName>Epididymal-specific lipocalin-6</fullName>
    </recommendedName>
    <alternativeName>
        <fullName>Lipocalin-5</fullName>
    </alternativeName>
</protein>
<evidence type="ECO:0000255" key="1"/>
<evidence type="ECO:0000305" key="2"/>
<comment type="function">
    <text>May play a role in male fertility.</text>
</comment>
<comment type="subcellular location">
    <subcellularLocation>
        <location>Secreted</location>
    </subcellularLocation>
    <text>Located on the head and tail of spermatozoa with the highest concentration on the post-acrosomal region of the head, where it appears aggregated into large patches.</text>
</comment>
<comment type="tissue specificity">
    <text>Predominantly expressed in epididymis.</text>
</comment>
<comment type="similarity">
    <text evidence="2">Belongs to the calycin superfamily. Lipocalin family.</text>
</comment>
<feature type="signal peptide" evidence="1">
    <location>
        <begin position="1"/>
        <end position="20"/>
    </location>
</feature>
<feature type="chain" id="PRO_0000017914" description="Epididymal-specific lipocalin-6">
    <location>
        <begin position="21"/>
        <end position="163"/>
    </location>
</feature>
<reference key="1">
    <citation type="journal article" date="2003" name="Reprod. Biol. Endocrinol.">
        <title>LCN6, a novel human epididymal lipocalin.</title>
        <authorList>
            <person name="Hamil K.G."/>
            <person name="Liu Q."/>
            <person name="Sivashanmugam P."/>
            <person name="Anbalagan M."/>
            <person name="Yenugu S."/>
            <person name="Soundararajan R."/>
            <person name="Grossman G."/>
            <person name="Rao A.J."/>
            <person name="Birse C.E."/>
            <person name="Ruben S.M."/>
            <person name="Richardson R.T."/>
            <person name="Zhang Y.L."/>
            <person name="O'Rand M.G."/>
            <person name="Petrusz P."/>
            <person name="French F.S."/>
            <person name="Hall S.H."/>
        </authorList>
    </citation>
    <scope>NUCLEOTIDE SEQUENCE [MRNA]</scope>
    <scope>CHARACTERIZATION</scope>
</reference>
<reference key="2">
    <citation type="journal article" date="2004" name="Gene">
        <title>Molecular evolution of epididymal lipocalin genes localized on mouse chromosome 2.</title>
        <authorList>
            <person name="Suzuki K."/>
            <person name="Lareyre J.-J."/>
            <person name="Sanchez D."/>
            <person name="Gutierrez G."/>
            <person name="Araki Y."/>
            <person name="Matusik R.J."/>
            <person name="Orgebin-Crist M.-C."/>
        </authorList>
    </citation>
    <scope>NUCLEOTIDE SEQUENCE [MRNA]</scope>
</reference>
<reference key="3">
    <citation type="journal article" date="2003" name="Genome Res.">
        <title>The secreted protein discovery initiative (SPDI), a large-scale effort to identify novel human secreted and transmembrane proteins: a bioinformatics assessment.</title>
        <authorList>
            <person name="Clark H.F."/>
            <person name="Gurney A.L."/>
            <person name="Abaya E."/>
            <person name="Baker K."/>
            <person name="Baldwin D.T."/>
            <person name="Brush J."/>
            <person name="Chen J."/>
            <person name="Chow B."/>
            <person name="Chui C."/>
            <person name="Crowley C."/>
            <person name="Currell B."/>
            <person name="Deuel B."/>
            <person name="Dowd P."/>
            <person name="Eaton D."/>
            <person name="Foster J.S."/>
            <person name="Grimaldi C."/>
            <person name="Gu Q."/>
            <person name="Hass P.E."/>
            <person name="Heldens S."/>
            <person name="Huang A."/>
            <person name="Kim H.S."/>
            <person name="Klimowski L."/>
            <person name="Jin Y."/>
            <person name="Johnson S."/>
            <person name="Lee J."/>
            <person name="Lewis L."/>
            <person name="Liao D."/>
            <person name="Mark M.R."/>
            <person name="Robbie E."/>
            <person name="Sanchez C."/>
            <person name="Schoenfeld J."/>
            <person name="Seshagiri S."/>
            <person name="Simmons L."/>
            <person name="Singh J."/>
            <person name="Smith V."/>
            <person name="Stinson J."/>
            <person name="Vagts A."/>
            <person name="Vandlen R.L."/>
            <person name="Watanabe C."/>
            <person name="Wieand D."/>
            <person name="Woods K."/>
            <person name="Xie M.-H."/>
            <person name="Yansura D.G."/>
            <person name="Yi S."/>
            <person name="Yu G."/>
            <person name="Yuan J."/>
            <person name="Zhang M."/>
            <person name="Zhang Z."/>
            <person name="Goddard A.D."/>
            <person name="Wood W.I."/>
            <person name="Godowski P.J."/>
            <person name="Gray A.M."/>
        </authorList>
    </citation>
    <scope>NUCLEOTIDE SEQUENCE [LARGE SCALE MRNA]</scope>
</reference>
<reference key="4">
    <citation type="journal article" date="2004" name="Nature">
        <title>DNA sequence and analysis of human chromosome 9.</title>
        <authorList>
            <person name="Humphray S.J."/>
            <person name="Oliver K."/>
            <person name="Hunt A.R."/>
            <person name="Plumb R.W."/>
            <person name="Loveland J.E."/>
            <person name="Howe K.L."/>
            <person name="Andrews T.D."/>
            <person name="Searle S."/>
            <person name="Hunt S.E."/>
            <person name="Scott C.E."/>
            <person name="Jones M.C."/>
            <person name="Ainscough R."/>
            <person name="Almeida J.P."/>
            <person name="Ambrose K.D."/>
            <person name="Ashwell R.I.S."/>
            <person name="Babbage A.K."/>
            <person name="Babbage S."/>
            <person name="Bagguley C.L."/>
            <person name="Bailey J."/>
            <person name="Banerjee R."/>
            <person name="Barker D.J."/>
            <person name="Barlow K.F."/>
            <person name="Bates K."/>
            <person name="Beasley H."/>
            <person name="Beasley O."/>
            <person name="Bird C.P."/>
            <person name="Bray-Allen S."/>
            <person name="Brown A.J."/>
            <person name="Brown J.Y."/>
            <person name="Burford D."/>
            <person name="Burrill W."/>
            <person name="Burton J."/>
            <person name="Carder C."/>
            <person name="Carter N.P."/>
            <person name="Chapman J.C."/>
            <person name="Chen Y."/>
            <person name="Clarke G."/>
            <person name="Clark S.Y."/>
            <person name="Clee C.M."/>
            <person name="Clegg S."/>
            <person name="Collier R.E."/>
            <person name="Corby N."/>
            <person name="Crosier M."/>
            <person name="Cummings A.T."/>
            <person name="Davies J."/>
            <person name="Dhami P."/>
            <person name="Dunn M."/>
            <person name="Dutta I."/>
            <person name="Dyer L.W."/>
            <person name="Earthrowl M.E."/>
            <person name="Faulkner L."/>
            <person name="Fleming C.J."/>
            <person name="Frankish A."/>
            <person name="Frankland J.A."/>
            <person name="French L."/>
            <person name="Fricker D.G."/>
            <person name="Garner P."/>
            <person name="Garnett J."/>
            <person name="Ghori J."/>
            <person name="Gilbert J.G.R."/>
            <person name="Glison C."/>
            <person name="Grafham D.V."/>
            <person name="Gribble S."/>
            <person name="Griffiths C."/>
            <person name="Griffiths-Jones S."/>
            <person name="Grocock R."/>
            <person name="Guy J."/>
            <person name="Hall R.E."/>
            <person name="Hammond S."/>
            <person name="Harley J.L."/>
            <person name="Harrison E.S.I."/>
            <person name="Hart E.A."/>
            <person name="Heath P.D."/>
            <person name="Henderson C.D."/>
            <person name="Hopkins B.L."/>
            <person name="Howard P.J."/>
            <person name="Howden P.J."/>
            <person name="Huckle E."/>
            <person name="Johnson C."/>
            <person name="Johnson D."/>
            <person name="Joy A.A."/>
            <person name="Kay M."/>
            <person name="Keenan S."/>
            <person name="Kershaw J.K."/>
            <person name="Kimberley A.M."/>
            <person name="King A."/>
            <person name="Knights A."/>
            <person name="Laird G.K."/>
            <person name="Langford C."/>
            <person name="Lawlor S."/>
            <person name="Leongamornlert D.A."/>
            <person name="Leversha M."/>
            <person name="Lloyd C."/>
            <person name="Lloyd D.M."/>
            <person name="Lovell J."/>
            <person name="Martin S."/>
            <person name="Mashreghi-Mohammadi M."/>
            <person name="Matthews L."/>
            <person name="McLaren S."/>
            <person name="McLay K.E."/>
            <person name="McMurray A."/>
            <person name="Milne S."/>
            <person name="Nickerson T."/>
            <person name="Nisbett J."/>
            <person name="Nordsiek G."/>
            <person name="Pearce A.V."/>
            <person name="Peck A.I."/>
            <person name="Porter K.M."/>
            <person name="Pandian R."/>
            <person name="Pelan S."/>
            <person name="Phillimore B."/>
            <person name="Povey S."/>
            <person name="Ramsey Y."/>
            <person name="Rand V."/>
            <person name="Scharfe M."/>
            <person name="Sehra H.K."/>
            <person name="Shownkeen R."/>
            <person name="Sims S.K."/>
            <person name="Skuce C.D."/>
            <person name="Smith M."/>
            <person name="Steward C.A."/>
            <person name="Swarbreck D."/>
            <person name="Sycamore N."/>
            <person name="Tester J."/>
            <person name="Thorpe A."/>
            <person name="Tracey A."/>
            <person name="Tromans A."/>
            <person name="Thomas D.W."/>
            <person name="Wall M."/>
            <person name="Wallis J.M."/>
            <person name="West A.P."/>
            <person name="Whitehead S.L."/>
            <person name="Willey D.L."/>
            <person name="Williams S.A."/>
            <person name="Wilming L."/>
            <person name="Wray P.W."/>
            <person name="Young L."/>
            <person name="Ashurst J.L."/>
            <person name="Coulson A."/>
            <person name="Blocker H."/>
            <person name="Durbin R.M."/>
            <person name="Sulston J.E."/>
            <person name="Hubbard T."/>
            <person name="Jackson M.J."/>
            <person name="Bentley D.R."/>
            <person name="Beck S."/>
            <person name="Rogers J."/>
            <person name="Dunham I."/>
        </authorList>
    </citation>
    <scope>NUCLEOTIDE SEQUENCE [LARGE SCALE GENOMIC DNA]</scope>
</reference>
<reference key="5">
    <citation type="submission" date="2005-07" db="EMBL/GenBank/DDBJ databases">
        <authorList>
            <person name="Mural R.J."/>
            <person name="Istrail S."/>
            <person name="Sutton G.G."/>
            <person name="Florea L."/>
            <person name="Halpern A.L."/>
            <person name="Mobarry C.M."/>
            <person name="Lippert R."/>
            <person name="Walenz B."/>
            <person name="Shatkay H."/>
            <person name="Dew I."/>
            <person name="Miller J.R."/>
            <person name="Flanigan M.J."/>
            <person name="Edwards N.J."/>
            <person name="Bolanos R."/>
            <person name="Fasulo D."/>
            <person name="Halldorsson B.V."/>
            <person name="Hannenhalli S."/>
            <person name="Turner R."/>
            <person name="Yooseph S."/>
            <person name="Lu F."/>
            <person name="Nusskern D.R."/>
            <person name="Shue B.C."/>
            <person name="Zheng X.H."/>
            <person name="Zhong F."/>
            <person name="Delcher A.L."/>
            <person name="Huson D.H."/>
            <person name="Kravitz S.A."/>
            <person name="Mouchard L."/>
            <person name="Reinert K."/>
            <person name="Remington K.A."/>
            <person name="Clark A.G."/>
            <person name="Waterman M.S."/>
            <person name="Eichler E.E."/>
            <person name="Adams M.D."/>
            <person name="Hunkapiller M.W."/>
            <person name="Myers E.W."/>
            <person name="Venter J.C."/>
        </authorList>
    </citation>
    <scope>NUCLEOTIDE SEQUENCE [LARGE SCALE GENOMIC DNA]</scope>
</reference>
<reference key="6">
    <citation type="journal article" date="2004" name="Genome Res.">
        <title>The status, quality, and expansion of the NIH full-length cDNA project: the Mammalian Gene Collection (MGC).</title>
        <authorList>
            <consortium name="The MGC Project Team"/>
        </authorList>
    </citation>
    <scope>NUCLEOTIDE SEQUENCE [LARGE SCALE MRNA]</scope>
</reference>
<accession>P62502</accession>
<accession>B0QZ80</accession>
<accession>Q71SF6</accession>
<keyword id="KW-0278">Fertilization</keyword>
<keyword id="KW-1185">Reference proteome</keyword>
<keyword id="KW-0964">Secreted</keyword>
<keyword id="KW-0732">Signal</keyword>
<dbReference type="EMBL" id="AF303084">
    <property type="protein sequence ID" value="AAQ14494.1"/>
    <property type="molecule type" value="mRNA"/>
</dbReference>
<dbReference type="EMBL" id="AY301269">
    <property type="protein sequence ID" value="AAQ81974.1"/>
    <property type="molecule type" value="mRNA"/>
</dbReference>
<dbReference type="EMBL" id="AY358598">
    <property type="protein sequence ID" value="AAQ88961.1"/>
    <property type="molecule type" value="mRNA"/>
</dbReference>
<dbReference type="EMBL" id="AL355987">
    <property type="status" value="NOT_ANNOTATED_CDS"/>
    <property type="molecule type" value="Genomic_DNA"/>
</dbReference>
<dbReference type="EMBL" id="CH471090">
    <property type="protein sequence ID" value="EAW88259.1"/>
    <property type="molecule type" value="Genomic_DNA"/>
</dbReference>
<dbReference type="EMBL" id="BC062746">
    <property type="protein sequence ID" value="AAH62746.1"/>
    <property type="molecule type" value="mRNA"/>
</dbReference>
<dbReference type="CCDS" id="CCDS7005.1"/>
<dbReference type="RefSeq" id="NP_945184.1">
    <property type="nucleotide sequence ID" value="NM_198946.3"/>
</dbReference>
<dbReference type="SMR" id="P62502"/>
<dbReference type="BioGRID" id="127644">
    <property type="interactions" value="78"/>
</dbReference>
<dbReference type="FunCoup" id="P62502">
    <property type="interactions" value="4"/>
</dbReference>
<dbReference type="IntAct" id="P62502">
    <property type="interactions" value="66"/>
</dbReference>
<dbReference type="STRING" id="9606.ENSP00000339621"/>
<dbReference type="iPTMnet" id="P62502"/>
<dbReference type="PhosphoSitePlus" id="P62502"/>
<dbReference type="BioMuta" id="LCN6"/>
<dbReference type="jPOST" id="P62502"/>
<dbReference type="MassIVE" id="P62502"/>
<dbReference type="PaxDb" id="9606-ENSP00000339621"/>
<dbReference type="PeptideAtlas" id="P62502"/>
<dbReference type="ABCD" id="P62502">
    <property type="antibodies" value="1 sequenced antibody"/>
</dbReference>
<dbReference type="Antibodypedia" id="67611">
    <property type="antibodies" value="103 antibodies from 22 providers"/>
</dbReference>
<dbReference type="DNASU" id="158062"/>
<dbReference type="Ensembl" id="ENST00000341206.9">
    <property type="protein sequence ID" value="ENSP00000339621.3"/>
    <property type="gene ID" value="ENSG00000267206.6"/>
</dbReference>
<dbReference type="GeneID" id="158062"/>
<dbReference type="KEGG" id="hsa:158062"/>
<dbReference type="MANE-Select" id="ENST00000341206.9">
    <property type="protein sequence ID" value="ENSP00000339621.3"/>
    <property type="RefSeq nucleotide sequence ID" value="NM_198946.3"/>
    <property type="RefSeq protein sequence ID" value="NP_945184.1"/>
</dbReference>
<dbReference type="UCSC" id="uc004ciy.4">
    <property type="organism name" value="human"/>
</dbReference>
<dbReference type="AGR" id="HGNC:17337"/>
<dbReference type="CTD" id="158062"/>
<dbReference type="DisGeNET" id="158062"/>
<dbReference type="GeneCards" id="LCN6"/>
<dbReference type="HGNC" id="HGNC:17337">
    <property type="gene designation" value="LCN6"/>
</dbReference>
<dbReference type="HPA" id="ENSG00000267206">
    <property type="expression patterns" value="Tissue enriched (epididymis)"/>
</dbReference>
<dbReference type="MIM" id="609379">
    <property type="type" value="gene"/>
</dbReference>
<dbReference type="neXtProt" id="NX_P62502"/>
<dbReference type="OpenTargets" id="ENSG00000267206"/>
<dbReference type="PharmGKB" id="PA30310"/>
<dbReference type="VEuPathDB" id="HostDB:ENSG00000267206"/>
<dbReference type="eggNOG" id="ENOG502T76S">
    <property type="taxonomic scope" value="Eukaryota"/>
</dbReference>
<dbReference type="GeneTree" id="ENSGT01050000244868"/>
<dbReference type="HOGENOM" id="CLU_1622859_0_0_1"/>
<dbReference type="InParanoid" id="P62502"/>
<dbReference type="OMA" id="VMVTLTP"/>
<dbReference type="OrthoDB" id="9574594at2759"/>
<dbReference type="PAN-GO" id="P62502">
    <property type="GO annotations" value="0 GO annotations based on evolutionary models"/>
</dbReference>
<dbReference type="PhylomeDB" id="P62502"/>
<dbReference type="TreeFam" id="TF353074"/>
<dbReference type="PathwayCommons" id="P62502"/>
<dbReference type="BioGRID-ORCS" id="158062">
    <property type="hits" value="43 hits in 1143 CRISPR screens"/>
</dbReference>
<dbReference type="GenomeRNAi" id="158062"/>
<dbReference type="Pharos" id="P62502">
    <property type="development level" value="Tbio"/>
</dbReference>
<dbReference type="PRO" id="PR:P62502"/>
<dbReference type="Proteomes" id="UP000005640">
    <property type="component" value="Chromosome 9"/>
</dbReference>
<dbReference type="RNAct" id="P62502">
    <property type="molecule type" value="protein"/>
</dbReference>
<dbReference type="Bgee" id="ENSG00000267206">
    <property type="expression patterns" value="Expressed in apex of heart and 89 other cell types or tissues"/>
</dbReference>
<dbReference type="ExpressionAtlas" id="P62502">
    <property type="expression patterns" value="baseline and differential"/>
</dbReference>
<dbReference type="GO" id="GO:0005576">
    <property type="term" value="C:extracellular region"/>
    <property type="evidence" value="ECO:0007669"/>
    <property type="project" value="UniProtKB-SubCell"/>
</dbReference>
<dbReference type="GO" id="GO:0036094">
    <property type="term" value="F:small molecule binding"/>
    <property type="evidence" value="ECO:0007669"/>
    <property type="project" value="InterPro"/>
</dbReference>
<dbReference type="GO" id="GO:0007340">
    <property type="term" value="P:acrosome reaction"/>
    <property type="evidence" value="ECO:0007669"/>
    <property type="project" value="Ensembl"/>
</dbReference>
<dbReference type="GO" id="GO:0055074">
    <property type="term" value="P:calcium ion homeostasis"/>
    <property type="evidence" value="ECO:0007669"/>
    <property type="project" value="Ensembl"/>
</dbReference>
<dbReference type="GO" id="GO:0048469">
    <property type="term" value="P:cell maturation"/>
    <property type="evidence" value="ECO:0007669"/>
    <property type="project" value="Ensembl"/>
</dbReference>
<dbReference type="GO" id="GO:0019725">
    <property type="term" value="P:cellular homeostasis"/>
    <property type="evidence" value="ECO:0007669"/>
    <property type="project" value="Ensembl"/>
</dbReference>
<dbReference type="GO" id="GO:0051592">
    <property type="term" value="P:response to calcium ion"/>
    <property type="evidence" value="ECO:0007669"/>
    <property type="project" value="Ensembl"/>
</dbReference>
<dbReference type="CDD" id="cd19426">
    <property type="entry name" value="lipocalin_6"/>
    <property type="match status" value="1"/>
</dbReference>
<dbReference type="Gene3D" id="2.40.128.20">
    <property type="match status" value="1"/>
</dbReference>
<dbReference type="InterPro" id="IPR012674">
    <property type="entry name" value="Calycin"/>
</dbReference>
<dbReference type="InterPro" id="IPR002345">
    <property type="entry name" value="Lipocalin"/>
</dbReference>
<dbReference type="InterPro" id="IPR022272">
    <property type="entry name" value="Lipocalin_CS"/>
</dbReference>
<dbReference type="InterPro" id="IPR000566">
    <property type="entry name" value="Lipocln_cytosolic_FA-bd_dom"/>
</dbReference>
<dbReference type="PANTHER" id="PTHR11430:SF10">
    <property type="entry name" value="EPIDIDYMAL-SPECIFIC LIPOCALIN-6"/>
    <property type="match status" value="1"/>
</dbReference>
<dbReference type="PANTHER" id="PTHR11430">
    <property type="entry name" value="LIPOCALIN"/>
    <property type="match status" value="1"/>
</dbReference>
<dbReference type="Pfam" id="PF00061">
    <property type="entry name" value="Lipocalin"/>
    <property type="match status" value="1"/>
</dbReference>
<dbReference type="SUPFAM" id="SSF50814">
    <property type="entry name" value="Lipocalins"/>
    <property type="match status" value="1"/>
</dbReference>
<dbReference type="PROSITE" id="PS00213">
    <property type="entry name" value="LIPOCALIN"/>
    <property type="match status" value="1"/>
</dbReference>
<proteinExistence type="evidence at protein level"/>
<sequence length="163" mass="18045">MGGLLLAAFLALVSVPRAQAVWLGRLDPEQLLGPWYVLAVASREKGFAMEKDMKNVVGVVVTLTPENNLRTLSSQHGLGGCDQSVMDLIKRNSGWVFENPSIGVLELWVLATNFRDYAIIFTQLEFGDEPFNTVELYSLTETASQEAMGLFTKWSRSLGFLSQ</sequence>